<proteinExistence type="inferred from homology"/>
<feature type="chain" id="PRO_0000313140" description="DNA ligase">
    <location>
        <begin position="1"/>
        <end position="920"/>
    </location>
</feature>
<feature type="domain" description="BRCT" evidence="1">
    <location>
        <begin position="839"/>
        <end position="920"/>
    </location>
</feature>
<feature type="region of interest" description="Disordered" evidence="2">
    <location>
        <begin position="659"/>
        <end position="691"/>
    </location>
</feature>
<feature type="compositionally biased region" description="Polar residues" evidence="2">
    <location>
        <begin position="669"/>
        <end position="682"/>
    </location>
</feature>
<feature type="active site" description="N6-AMP-lysine intermediate" evidence="1">
    <location>
        <position position="175"/>
    </location>
</feature>
<feature type="binding site" evidence="1">
    <location>
        <begin position="90"/>
        <end position="94"/>
    </location>
    <ligand>
        <name>NAD(+)</name>
        <dbReference type="ChEBI" id="CHEBI:57540"/>
    </ligand>
</feature>
<feature type="binding site" evidence="1">
    <location>
        <begin position="139"/>
        <end position="140"/>
    </location>
    <ligand>
        <name>NAD(+)</name>
        <dbReference type="ChEBI" id="CHEBI:57540"/>
    </ligand>
</feature>
<feature type="binding site" evidence="1">
    <location>
        <position position="173"/>
    </location>
    <ligand>
        <name>NAD(+)</name>
        <dbReference type="ChEBI" id="CHEBI:57540"/>
    </ligand>
</feature>
<feature type="binding site" evidence="1">
    <location>
        <position position="196"/>
    </location>
    <ligand>
        <name>NAD(+)</name>
        <dbReference type="ChEBI" id="CHEBI:57540"/>
    </ligand>
</feature>
<feature type="binding site" evidence="1">
    <location>
        <position position="235"/>
    </location>
    <ligand>
        <name>NAD(+)</name>
        <dbReference type="ChEBI" id="CHEBI:57540"/>
    </ligand>
</feature>
<feature type="binding site" evidence="1">
    <location>
        <position position="360"/>
    </location>
    <ligand>
        <name>NAD(+)</name>
        <dbReference type="ChEBI" id="CHEBI:57540"/>
    </ligand>
</feature>
<feature type="binding site" evidence="1">
    <location>
        <position position="384"/>
    </location>
    <ligand>
        <name>NAD(+)</name>
        <dbReference type="ChEBI" id="CHEBI:57540"/>
    </ligand>
</feature>
<feature type="binding site" evidence="1">
    <location>
        <position position="481"/>
    </location>
    <ligand>
        <name>Zn(2+)</name>
        <dbReference type="ChEBI" id="CHEBI:29105"/>
    </ligand>
</feature>
<feature type="binding site" evidence="1">
    <location>
        <position position="484"/>
    </location>
    <ligand>
        <name>Zn(2+)</name>
        <dbReference type="ChEBI" id="CHEBI:29105"/>
    </ligand>
</feature>
<feature type="binding site" evidence="1">
    <location>
        <position position="500"/>
    </location>
    <ligand>
        <name>Zn(2+)</name>
        <dbReference type="ChEBI" id="CHEBI:29105"/>
    </ligand>
</feature>
<feature type="binding site" evidence="1">
    <location>
        <position position="506"/>
    </location>
    <ligand>
        <name>Zn(2+)</name>
        <dbReference type="ChEBI" id="CHEBI:29105"/>
    </ligand>
</feature>
<organism>
    <name type="scientific">Bifidobacterium longum (strain NCC 2705)</name>
    <dbReference type="NCBI Taxonomy" id="206672"/>
    <lineage>
        <taxon>Bacteria</taxon>
        <taxon>Bacillati</taxon>
        <taxon>Actinomycetota</taxon>
        <taxon>Actinomycetes</taxon>
        <taxon>Bifidobacteriales</taxon>
        <taxon>Bifidobacteriaceae</taxon>
        <taxon>Bifidobacterium</taxon>
    </lineage>
</organism>
<accession>Q8G830</accession>
<protein>
    <recommendedName>
        <fullName evidence="1">DNA ligase</fullName>
        <ecNumber evidence="1">6.5.1.2</ecNumber>
    </recommendedName>
    <alternativeName>
        <fullName evidence="1">Polydeoxyribonucleotide synthase [NAD(+)]</fullName>
    </alternativeName>
</protein>
<dbReference type="EC" id="6.5.1.2" evidence="1"/>
<dbReference type="EMBL" id="AE014295">
    <property type="protein sequence ID" value="AAN23919.1"/>
    <property type="molecule type" value="Genomic_DNA"/>
</dbReference>
<dbReference type="RefSeq" id="NP_695283.1">
    <property type="nucleotide sequence ID" value="NC_004307.2"/>
</dbReference>
<dbReference type="RefSeq" id="WP_011067935.1">
    <property type="nucleotide sequence ID" value="NC_004307.2"/>
</dbReference>
<dbReference type="SMR" id="Q8G830"/>
<dbReference type="STRING" id="206672.BL0052"/>
<dbReference type="EnsemblBacteria" id="AAN23919">
    <property type="protein sequence ID" value="AAN23919"/>
    <property type="gene ID" value="BL0052"/>
</dbReference>
<dbReference type="KEGG" id="blo:BL0052"/>
<dbReference type="PATRIC" id="fig|206672.9.peg.54"/>
<dbReference type="HOGENOM" id="CLU_007764_1_1_11"/>
<dbReference type="OrthoDB" id="9759736at2"/>
<dbReference type="PhylomeDB" id="Q8G830"/>
<dbReference type="Proteomes" id="UP000000439">
    <property type="component" value="Chromosome"/>
</dbReference>
<dbReference type="GO" id="GO:0005829">
    <property type="term" value="C:cytosol"/>
    <property type="evidence" value="ECO:0007669"/>
    <property type="project" value="TreeGrafter"/>
</dbReference>
<dbReference type="GO" id="GO:0003911">
    <property type="term" value="F:DNA ligase (NAD+) activity"/>
    <property type="evidence" value="ECO:0007669"/>
    <property type="project" value="UniProtKB-UniRule"/>
</dbReference>
<dbReference type="GO" id="GO:0046872">
    <property type="term" value="F:metal ion binding"/>
    <property type="evidence" value="ECO:0007669"/>
    <property type="project" value="UniProtKB-KW"/>
</dbReference>
<dbReference type="GO" id="GO:0006281">
    <property type="term" value="P:DNA repair"/>
    <property type="evidence" value="ECO:0007669"/>
    <property type="project" value="UniProtKB-KW"/>
</dbReference>
<dbReference type="GO" id="GO:0006260">
    <property type="term" value="P:DNA replication"/>
    <property type="evidence" value="ECO:0007669"/>
    <property type="project" value="UniProtKB-KW"/>
</dbReference>
<dbReference type="CDD" id="cd17748">
    <property type="entry name" value="BRCT_DNA_ligase_like"/>
    <property type="match status" value="1"/>
</dbReference>
<dbReference type="CDD" id="cd00114">
    <property type="entry name" value="LIGANc"/>
    <property type="match status" value="1"/>
</dbReference>
<dbReference type="FunFam" id="2.40.50.140:FF:000012">
    <property type="entry name" value="DNA ligase"/>
    <property type="match status" value="1"/>
</dbReference>
<dbReference type="FunFam" id="3.30.470.30:FF:000001">
    <property type="entry name" value="DNA ligase"/>
    <property type="match status" value="1"/>
</dbReference>
<dbReference type="FunFam" id="3.40.50.10190:FF:000054">
    <property type="entry name" value="DNA ligase"/>
    <property type="match status" value="1"/>
</dbReference>
<dbReference type="Gene3D" id="6.20.10.30">
    <property type="match status" value="1"/>
</dbReference>
<dbReference type="Gene3D" id="1.10.150.20">
    <property type="entry name" value="5' to 3' exonuclease, C-terminal subdomain"/>
    <property type="match status" value="2"/>
</dbReference>
<dbReference type="Gene3D" id="3.40.50.10190">
    <property type="entry name" value="BRCT domain"/>
    <property type="match status" value="1"/>
</dbReference>
<dbReference type="Gene3D" id="3.30.470.30">
    <property type="entry name" value="DNA ligase/mRNA capping enzyme"/>
    <property type="match status" value="1"/>
</dbReference>
<dbReference type="Gene3D" id="1.10.287.610">
    <property type="entry name" value="Helix hairpin bin"/>
    <property type="match status" value="1"/>
</dbReference>
<dbReference type="Gene3D" id="2.40.50.140">
    <property type="entry name" value="Nucleic acid-binding proteins"/>
    <property type="match status" value="1"/>
</dbReference>
<dbReference type="HAMAP" id="MF_01588">
    <property type="entry name" value="DNA_ligase_A"/>
    <property type="match status" value="1"/>
</dbReference>
<dbReference type="InterPro" id="IPR001357">
    <property type="entry name" value="BRCT_dom"/>
</dbReference>
<dbReference type="InterPro" id="IPR036420">
    <property type="entry name" value="BRCT_dom_sf"/>
</dbReference>
<dbReference type="InterPro" id="IPR041663">
    <property type="entry name" value="DisA/LigA_HHH"/>
</dbReference>
<dbReference type="InterPro" id="IPR001679">
    <property type="entry name" value="DNA_ligase"/>
</dbReference>
<dbReference type="InterPro" id="IPR018239">
    <property type="entry name" value="DNA_ligase_AS"/>
</dbReference>
<dbReference type="InterPro" id="IPR033136">
    <property type="entry name" value="DNA_ligase_CS"/>
</dbReference>
<dbReference type="InterPro" id="IPR013839">
    <property type="entry name" value="DNAligase_adenylation"/>
</dbReference>
<dbReference type="InterPro" id="IPR013840">
    <property type="entry name" value="DNAligase_N"/>
</dbReference>
<dbReference type="InterPro" id="IPR012340">
    <property type="entry name" value="NA-bd_OB-fold"/>
</dbReference>
<dbReference type="InterPro" id="IPR004150">
    <property type="entry name" value="NAD_DNA_ligase_OB"/>
</dbReference>
<dbReference type="InterPro" id="IPR010994">
    <property type="entry name" value="RuvA_2-like"/>
</dbReference>
<dbReference type="InterPro" id="IPR004149">
    <property type="entry name" value="Znf_DNAligase_C4"/>
</dbReference>
<dbReference type="NCBIfam" id="TIGR00575">
    <property type="entry name" value="dnlj"/>
    <property type="match status" value="1"/>
</dbReference>
<dbReference type="NCBIfam" id="NF005932">
    <property type="entry name" value="PRK07956.1"/>
    <property type="match status" value="1"/>
</dbReference>
<dbReference type="PANTHER" id="PTHR23389">
    <property type="entry name" value="CHROMOSOME TRANSMISSION FIDELITY FACTOR 18"/>
    <property type="match status" value="1"/>
</dbReference>
<dbReference type="PANTHER" id="PTHR23389:SF9">
    <property type="entry name" value="DNA LIGASE"/>
    <property type="match status" value="1"/>
</dbReference>
<dbReference type="Pfam" id="PF00533">
    <property type="entry name" value="BRCT"/>
    <property type="match status" value="1"/>
</dbReference>
<dbReference type="Pfam" id="PF01653">
    <property type="entry name" value="DNA_ligase_aden"/>
    <property type="match status" value="1"/>
</dbReference>
<dbReference type="Pfam" id="PF03120">
    <property type="entry name" value="DNA_ligase_OB"/>
    <property type="match status" value="1"/>
</dbReference>
<dbReference type="Pfam" id="PF03119">
    <property type="entry name" value="DNA_ligase_ZBD"/>
    <property type="match status" value="1"/>
</dbReference>
<dbReference type="Pfam" id="PF12826">
    <property type="entry name" value="HHH_2"/>
    <property type="match status" value="1"/>
</dbReference>
<dbReference type="SMART" id="SM00292">
    <property type="entry name" value="BRCT"/>
    <property type="match status" value="1"/>
</dbReference>
<dbReference type="SMART" id="SM00532">
    <property type="entry name" value="LIGANc"/>
    <property type="match status" value="1"/>
</dbReference>
<dbReference type="SUPFAM" id="SSF52113">
    <property type="entry name" value="BRCT domain"/>
    <property type="match status" value="1"/>
</dbReference>
<dbReference type="SUPFAM" id="SSF56091">
    <property type="entry name" value="DNA ligase/mRNA capping enzyme, catalytic domain"/>
    <property type="match status" value="1"/>
</dbReference>
<dbReference type="SUPFAM" id="SSF50249">
    <property type="entry name" value="Nucleic acid-binding proteins"/>
    <property type="match status" value="1"/>
</dbReference>
<dbReference type="SUPFAM" id="SSF47781">
    <property type="entry name" value="RuvA domain 2-like"/>
    <property type="match status" value="2"/>
</dbReference>
<dbReference type="PROSITE" id="PS50172">
    <property type="entry name" value="BRCT"/>
    <property type="match status" value="1"/>
</dbReference>
<dbReference type="PROSITE" id="PS01055">
    <property type="entry name" value="DNA_LIGASE_N1"/>
    <property type="match status" value="1"/>
</dbReference>
<dbReference type="PROSITE" id="PS01056">
    <property type="entry name" value="DNA_LIGASE_N2"/>
    <property type="match status" value="1"/>
</dbReference>
<comment type="function">
    <text evidence="1">DNA ligase that catalyzes the formation of phosphodiester linkages between 5'-phosphoryl and 3'-hydroxyl groups in double-stranded DNA using NAD as a coenzyme and as the energy source for the reaction. It is essential for DNA replication and repair of damaged DNA.</text>
</comment>
<comment type="catalytic activity">
    <reaction evidence="1">
        <text>NAD(+) + (deoxyribonucleotide)n-3'-hydroxyl + 5'-phospho-(deoxyribonucleotide)m = (deoxyribonucleotide)n+m + AMP + beta-nicotinamide D-nucleotide.</text>
        <dbReference type="EC" id="6.5.1.2"/>
    </reaction>
</comment>
<comment type="cofactor">
    <cofactor evidence="1">
        <name>Mg(2+)</name>
        <dbReference type="ChEBI" id="CHEBI:18420"/>
    </cofactor>
    <cofactor evidence="1">
        <name>Mn(2+)</name>
        <dbReference type="ChEBI" id="CHEBI:29035"/>
    </cofactor>
</comment>
<comment type="similarity">
    <text evidence="1">Belongs to the NAD-dependent DNA ligase family. LigA subfamily.</text>
</comment>
<gene>
    <name evidence="1" type="primary">ligA</name>
    <name type="ordered locus">BL0052</name>
</gene>
<sequence length="920" mass="99855">MSTNEQLAWDFDDGDVAEVRPDTGIARFAPGSEQWIAALQPTDDDAIRLDRFDVNTMTAEAAARLWARVAAWVESDQIAYYIDDSPVSSDAAYDARMRCLERLEAAFPSLDNPQSPTHRVGGSFSNDFASVRHPSRMMSLDDVFSIEELKDWYDSVIRDLDWPESKPLPMSCEVKIDGLALNLIYRNGVLEQGLTRGDGVTGEDITLNVRTIGSIPANLGGPKEDVPDFVEIRGEVFMRWDDFHTLNNEQEDAGRAPFANPRNAAAGSLRQKDPRITATRRLSFYAHGLGQLTWGPDHPRGTHDVVADQSQAYDLYTKWGVPVSPHNRAVTSFQEILDMIEYYGEHRGDIEHALDGIVVKVDDLGLQRTLGATSRAPRWAIAYKYPPEEVNTELLNITVQVGRTGRVTPVAVLKPVYVAGSTVARTTLHNGFEVKRKGILIGDTVVVRKAGDVIPELVGPVLERRKGREDQLREFVMPEFCPSCGAKLSPAKEGDKDIRCPNVESCPAQLTERVISLASRKAFDIEHLGEQSAIALTNPEENRPDSVATYAPNITEVLVAPGEEPDPYEPVEGLELPAAQKPVLSNESGLFNLTAADLRDVRVWREAAIVEVHETVGANGKKKKVRKRVGGSGLWHQVPAFWTAPTPAKKLTAKQLAERAQGEAAIESAETQGDTASETTGAPTGAEAPLGTMPGFAAASYPEYDVPADAVIVRVDHKTTRTGVTDVPVIIRPGENTRKMFDEMDKARHADLWRVLVALSIRRLGPPTARLIASAMGSLAAIENATIEDLTAIDGVGPEIAESVVNWFAATREPGDWRGATLRAWQAAGVGVDEAETSSLPQTLAGKTVVVTGSLEGYSRDSAKEAIIERGGKAAGSVSKKTDYVVIGANAGSKAAKAEELGIPMLSETQFAQLLATGTI</sequence>
<name>DNLJ_BIFLO</name>
<evidence type="ECO:0000255" key="1">
    <source>
        <dbReference type="HAMAP-Rule" id="MF_01588"/>
    </source>
</evidence>
<evidence type="ECO:0000256" key="2">
    <source>
        <dbReference type="SAM" id="MobiDB-lite"/>
    </source>
</evidence>
<reference key="1">
    <citation type="journal article" date="2002" name="Proc. Natl. Acad. Sci. U.S.A.">
        <title>The genome sequence of Bifidobacterium longum reflects its adaptation to the human gastrointestinal tract.</title>
        <authorList>
            <person name="Schell M.A."/>
            <person name="Karmirantzou M."/>
            <person name="Snel B."/>
            <person name="Vilanova D."/>
            <person name="Berger B."/>
            <person name="Pessi G."/>
            <person name="Zwahlen M.-C."/>
            <person name="Desiere F."/>
            <person name="Bork P."/>
            <person name="Delley M."/>
            <person name="Pridmore R.D."/>
            <person name="Arigoni F."/>
        </authorList>
    </citation>
    <scope>NUCLEOTIDE SEQUENCE [LARGE SCALE GENOMIC DNA]</scope>
    <source>
        <strain>NCC 2705</strain>
    </source>
</reference>
<keyword id="KW-0227">DNA damage</keyword>
<keyword id="KW-0234">DNA repair</keyword>
<keyword id="KW-0235">DNA replication</keyword>
<keyword id="KW-0436">Ligase</keyword>
<keyword id="KW-0460">Magnesium</keyword>
<keyword id="KW-0464">Manganese</keyword>
<keyword id="KW-0479">Metal-binding</keyword>
<keyword id="KW-0520">NAD</keyword>
<keyword id="KW-1185">Reference proteome</keyword>
<keyword id="KW-0862">Zinc</keyword>